<name>BIOF_GEODF</name>
<sequence length="393" mass="41786">MQTFGEELESLRAAGLFRSMRLVEGEQSSRIILDGREVLLLCSNNYLGLADHPLLKEAAIRAVERFGVGSGAARLVSGNMELHFRLEERIAAFKGTEAALVFNSGYAANTGIISAIAGRGDLIFSDRLNHASIVDGALLSRAKVIRYSHNDMVALRRLLEENRSTSGRRIIVTDGVFSMDGDLAELAELAALKEEFGALLMVDDAHGTGVLGEHGRGSAELCGVMDRVDIHMGTLGKALGSFGAYAAASKEIIDYLVNRARSFIFSTSLPPAVLAASIAAFDLVDSQAGADLRKGLAANSTRFKDGLENAGFNTMGSETQIVPAFVGGAAETMKFSRKLLDQGIFVQGIRPPTVPVGSCRLRCTLMATHSQADVDRAVSAIAHVGRKLGVTGC</sequence>
<comment type="function">
    <text evidence="1">Catalyzes the decarboxylative condensation of pimeloyl-[acyl-carrier protein] and L-alanine to produce 8-amino-7-oxononanoate (AON), [acyl-carrier protein], and carbon dioxide.</text>
</comment>
<comment type="catalytic activity">
    <reaction evidence="1">
        <text>6-carboxyhexanoyl-[ACP] + L-alanine + H(+) = (8S)-8-amino-7-oxononanoate + holo-[ACP] + CO2</text>
        <dbReference type="Rhea" id="RHEA:42288"/>
        <dbReference type="Rhea" id="RHEA-COMP:9685"/>
        <dbReference type="Rhea" id="RHEA-COMP:9955"/>
        <dbReference type="ChEBI" id="CHEBI:15378"/>
        <dbReference type="ChEBI" id="CHEBI:16526"/>
        <dbReference type="ChEBI" id="CHEBI:57972"/>
        <dbReference type="ChEBI" id="CHEBI:64479"/>
        <dbReference type="ChEBI" id="CHEBI:78846"/>
        <dbReference type="ChEBI" id="CHEBI:149468"/>
        <dbReference type="EC" id="2.3.1.47"/>
    </reaction>
</comment>
<comment type="cofactor">
    <cofactor evidence="1">
        <name>pyridoxal 5'-phosphate</name>
        <dbReference type="ChEBI" id="CHEBI:597326"/>
    </cofactor>
</comment>
<comment type="pathway">
    <text evidence="1">Cofactor biosynthesis; biotin biosynthesis.</text>
</comment>
<comment type="subunit">
    <text evidence="1">Homodimer.</text>
</comment>
<comment type="similarity">
    <text evidence="1">Belongs to the class-II pyridoxal-phosphate-dependent aminotransferase family. BioF subfamily.</text>
</comment>
<organism>
    <name type="scientific">Geotalea daltonii (strain DSM 22248 / JCM 15807 / FRC-32)</name>
    <name type="common">Geobacter daltonii</name>
    <dbReference type="NCBI Taxonomy" id="316067"/>
    <lineage>
        <taxon>Bacteria</taxon>
        <taxon>Pseudomonadati</taxon>
        <taxon>Thermodesulfobacteriota</taxon>
        <taxon>Desulfuromonadia</taxon>
        <taxon>Geobacterales</taxon>
        <taxon>Geobacteraceae</taxon>
        <taxon>Geotalea</taxon>
    </lineage>
</organism>
<feature type="chain" id="PRO_0000380997" description="8-amino-7-oxononanoate synthase">
    <location>
        <begin position="1"/>
        <end position="393"/>
    </location>
</feature>
<feature type="binding site" evidence="1">
    <location>
        <position position="18"/>
    </location>
    <ligand>
        <name>substrate</name>
    </ligand>
</feature>
<feature type="binding site" evidence="1">
    <location>
        <begin position="105"/>
        <end position="106"/>
    </location>
    <ligand>
        <name>pyridoxal 5'-phosphate</name>
        <dbReference type="ChEBI" id="CHEBI:597326"/>
    </ligand>
</feature>
<feature type="binding site" evidence="1">
    <location>
        <position position="130"/>
    </location>
    <ligand>
        <name>substrate</name>
    </ligand>
</feature>
<feature type="binding site" evidence="1">
    <location>
        <position position="178"/>
    </location>
    <ligand>
        <name>pyridoxal 5'-phosphate</name>
        <dbReference type="ChEBI" id="CHEBI:597326"/>
    </ligand>
</feature>
<feature type="binding site" evidence="1">
    <location>
        <position position="206"/>
    </location>
    <ligand>
        <name>pyridoxal 5'-phosphate</name>
        <dbReference type="ChEBI" id="CHEBI:597326"/>
    </ligand>
</feature>
<feature type="binding site" evidence="1">
    <location>
        <position position="234"/>
    </location>
    <ligand>
        <name>pyridoxal 5'-phosphate</name>
        <dbReference type="ChEBI" id="CHEBI:597326"/>
    </ligand>
</feature>
<feature type="binding site" evidence="1">
    <location>
        <position position="353"/>
    </location>
    <ligand>
        <name>substrate</name>
    </ligand>
</feature>
<feature type="modified residue" description="N6-(pyridoxal phosphate)lysine" evidence="1">
    <location>
        <position position="237"/>
    </location>
</feature>
<gene>
    <name evidence="1" type="primary">bioF</name>
    <name type="ordered locus">Geob_2084</name>
</gene>
<proteinExistence type="inferred from homology"/>
<reference key="1">
    <citation type="submission" date="2009-01" db="EMBL/GenBank/DDBJ databases">
        <title>Complete sequence of Geobacter sp. FRC-32.</title>
        <authorList>
            <consortium name="US DOE Joint Genome Institute"/>
            <person name="Lucas S."/>
            <person name="Copeland A."/>
            <person name="Lapidus A."/>
            <person name="Glavina del Rio T."/>
            <person name="Dalin E."/>
            <person name="Tice H."/>
            <person name="Bruce D."/>
            <person name="Goodwin L."/>
            <person name="Pitluck S."/>
            <person name="Saunders E."/>
            <person name="Brettin T."/>
            <person name="Detter J.C."/>
            <person name="Han C."/>
            <person name="Larimer F."/>
            <person name="Land M."/>
            <person name="Hauser L."/>
            <person name="Kyrpides N."/>
            <person name="Ovchinnikova G."/>
            <person name="Kostka J."/>
            <person name="Richardson P."/>
        </authorList>
    </citation>
    <scope>NUCLEOTIDE SEQUENCE [LARGE SCALE GENOMIC DNA]</scope>
    <source>
        <strain>DSM 22248 / JCM 15807 / FRC-32</strain>
    </source>
</reference>
<dbReference type="EC" id="2.3.1.47" evidence="1"/>
<dbReference type="EMBL" id="CP001390">
    <property type="protein sequence ID" value="ACM20439.1"/>
    <property type="molecule type" value="Genomic_DNA"/>
</dbReference>
<dbReference type="RefSeq" id="WP_012647168.1">
    <property type="nucleotide sequence ID" value="NC_011979.1"/>
</dbReference>
<dbReference type="SMR" id="B9M8U3"/>
<dbReference type="STRING" id="316067.Geob_2084"/>
<dbReference type="KEGG" id="geo:Geob_2084"/>
<dbReference type="eggNOG" id="COG0156">
    <property type="taxonomic scope" value="Bacteria"/>
</dbReference>
<dbReference type="HOGENOM" id="CLU_015846_11_0_7"/>
<dbReference type="OrthoDB" id="9807157at2"/>
<dbReference type="UniPathway" id="UPA00078"/>
<dbReference type="Proteomes" id="UP000007721">
    <property type="component" value="Chromosome"/>
</dbReference>
<dbReference type="GO" id="GO:0008710">
    <property type="term" value="F:8-amino-7-oxononanoate synthase activity"/>
    <property type="evidence" value="ECO:0007669"/>
    <property type="project" value="UniProtKB-EC"/>
</dbReference>
<dbReference type="GO" id="GO:0030170">
    <property type="term" value="F:pyridoxal phosphate binding"/>
    <property type="evidence" value="ECO:0007669"/>
    <property type="project" value="InterPro"/>
</dbReference>
<dbReference type="GO" id="GO:0009102">
    <property type="term" value="P:biotin biosynthetic process"/>
    <property type="evidence" value="ECO:0007669"/>
    <property type="project" value="UniProtKB-UniPathway"/>
</dbReference>
<dbReference type="CDD" id="cd06454">
    <property type="entry name" value="KBL_like"/>
    <property type="match status" value="1"/>
</dbReference>
<dbReference type="FunFam" id="3.40.640.10:FF:000006">
    <property type="entry name" value="5-aminolevulinate synthase, mitochondrial"/>
    <property type="match status" value="1"/>
</dbReference>
<dbReference type="Gene3D" id="3.90.1150.10">
    <property type="entry name" value="Aspartate Aminotransferase, domain 1"/>
    <property type="match status" value="1"/>
</dbReference>
<dbReference type="Gene3D" id="3.40.640.10">
    <property type="entry name" value="Type I PLP-dependent aspartate aminotransferase-like (Major domain)"/>
    <property type="match status" value="1"/>
</dbReference>
<dbReference type="HAMAP" id="MF_01693">
    <property type="entry name" value="BioF_aminotrans_2"/>
    <property type="match status" value="1"/>
</dbReference>
<dbReference type="InterPro" id="IPR001917">
    <property type="entry name" value="Aminotrans_II_pyridoxalP_BS"/>
</dbReference>
<dbReference type="InterPro" id="IPR004839">
    <property type="entry name" value="Aminotransferase_I/II_large"/>
</dbReference>
<dbReference type="InterPro" id="IPR050087">
    <property type="entry name" value="AON_synthase_class-II"/>
</dbReference>
<dbReference type="InterPro" id="IPR004723">
    <property type="entry name" value="AONS_Archaea/Proteobacteria"/>
</dbReference>
<dbReference type="InterPro" id="IPR022834">
    <property type="entry name" value="AONS_Proteobacteria"/>
</dbReference>
<dbReference type="InterPro" id="IPR015424">
    <property type="entry name" value="PyrdxlP-dep_Trfase"/>
</dbReference>
<dbReference type="InterPro" id="IPR015421">
    <property type="entry name" value="PyrdxlP-dep_Trfase_major"/>
</dbReference>
<dbReference type="InterPro" id="IPR015422">
    <property type="entry name" value="PyrdxlP-dep_Trfase_small"/>
</dbReference>
<dbReference type="NCBIfam" id="TIGR00858">
    <property type="entry name" value="bioF"/>
    <property type="match status" value="1"/>
</dbReference>
<dbReference type="PANTHER" id="PTHR13693:SF100">
    <property type="entry name" value="8-AMINO-7-OXONONANOATE SYNTHASE"/>
    <property type="match status" value="1"/>
</dbReference>
<dbReference type="PANTHER" id="PTHR13693">
    <property type="entry name" value="CLASS II AMINOTRANSFERASE/8-AMINO-7-OXONONANOATE SYNTHASE"/>
    <property type="match status" value="1"/>
</dbReference>
<dbReference type="Pfam" id="PF00155">
    <property type="entry name" value="Aminotran_1_2"/>
    <property type="match status" value="1"/>
</dbReference>
<dbReference type="SUPFAM" id="SSF53383">
    <property type="entry name" value="PLP-dependent transferases"/>
    <property type="match status" value="1"/>
</dbReference>
<dbReference type="PROSITE" id="PS00599">
    <property type="entry name" value="AA_TRANSFER_CLASS_2"/>
    <property type="match status" value="1"/>
</dbReference>
<evidence type="ECO:0000255" key="1">
    <source>
        <dbReference type="HAMAP-Rule" id="MF_01693"/>
    </source>
</evidence>
<protein>
    <recommendedName>
        <fullName evidence="1">8-amino-7-oxononanoate synthase</fullName>
        <shortName evidence="1">AONS</shortName>
        <ecNumber evidence="1">2.3.1.47</ecNumber>
    </recommendedName>
    <alternativeName>
        <fullName evidence="1">7-keto-8-amino-pelargonic acid synthase</fullName>
        <shortName evidence="1">7-KAP synthase</shortName>
        <shortName evidence="1">KAPA synthase</shortName>
    </alternativeName>
    <alternativeName>
        <fullName evidence="1">8-amino-7-ketopelargonate synthase</fullName>
    </alternativeName>
</protein>
<accession>B9M8U3</accession>
<keyword id="KW-0093">Biotin biosynthesis</keyword>
<keyword id="KW-0663">Pyridoxal phosphate</keyword>
<keyword id="KW-1185">Reference proteome</keyword>
<keyword id="KW-0808">Transferase</keyword>